<dbReference type="EMBL" id="CR936503">
    <property type="protein sequence ID" value="CAI56185.1"/>
    <property type="molecule type" value="Genomic_DNA"/>
</dbReference>
<dbReference type="RefSeq" id="WP_011375559.1">
    <property type="nucleotide sequence ID" value="NC_007576.1"/>
</dbReference>
<dbReference type="SMR" id="Q38UF0"/>
<dbReference type="STRING" id="314315.LCA_1879"/>
<dbReference type="KEGG" id="lsa:LCA_1879"/>
<dbReference type="eggNOG" id="COG0445">
    <property type="taxonomic scope" value="Bacteria"/>
</dbReference>
<dbReference type="HOGENOM" id="CLU_007831_2_2_9"/>
<dbReference type="OrthoDB" id="9815560at2"/>
<dbReference type="Proteomes" id="UP000002707">
    <property type="component" value="Chromosome"/>
</dbReference>
<dbReference type="GO" id="GO:0005829">
    <property type="term" value="C:cytosol"/>
    <property type="evidence" value="ECO:0007669"/>
    <property type="project" value="TreeGrafter"/>
</dbReference>
<dbReference type="GO" id="GO:0050660">
    <property type="term" value="F:flavin adenine dinucleotide binding"/>
    <property type="evidence" value="ECO:0007669"/>
    <property type="project" value="UniProtKB-UniRule"/>
</dbReference>
<dbReference type="GO" id="GO:0030488">
    <property type="term" value="P:tRNA methylation"/>
    <property type="evidence" value="ECO:0007669"/>
    <property type="project" value="TreeGrafter"/>
</dbReference>
<dbReference type="GO" id="GO:0002098">
    <property type="term" value="P:tRNA wobble uridine modification"/>
    <property type="evidence" value="ECO:0007669"/>
    <property type="project" value="InterPro"/>
</dbReference>
<dbReference type="FunFam" id="1.10.10.1800:FF:000001">
    <property type="entry name" value="tRNA uridine 5-carboxymethylaminomethyl modification enzyme MnmG"/>
    <property type="match status" value="1"/>
</dbReference>
<dbReference type="FunFam" id="1.10.150.570:FF:000001">
    <property type="entry name" value="tRNA uridine 5-carboxymethylaminomethyl modification enzyme MnmG"/>
    <property type="match status" value="1"/>
</dbReference>
<dbReference type="FunFam" id="3.50.50.60:FF:000002">
    <property type="entry name" value="tRNA uridine 5-carboxymethylaminomethyl modification enzyme MnmG"/>
    <property type="match status" value="1"/>
</dbReference>
<dbReference type="FunFam" id="3.50.50.60:FF:000063">
    <property type="entry name" value="tRNA uridine 5-carboxymethylaminomethyl modification enzyme MnmG"/>
    <property type="match status" value="1"/>
</dbReference>
<dbReference type="Gene3D" id="3.50.50.60">
    <property type="entry name" value="FAD/NAD(P)-binding domain"/>
    <property type="match status" value="2"/>
</dbReference>
<dbReference type="Gene3D" id="1.10.150.570">
    <property type="entry name" value="GidA associated domain, C-terminal subdomain"/>
    <property type="match status" value="1"/>
</dbReference>
<dbReference type="Gene3D" id="1.10.10.1800">
    <property type="entry name" value="tRNA uridine 5-carboxymethylaminomethyl modification enzyme MnmG/GidA"/>
    <property type="match status" value="1"/>
</dbReference>
<dbReference type="HAMAP" id="MF_00129">
    <property type="entry name" value="MnmG_GidA"/>
    <property type="match status" value="1"/>
</dbReference>
<dbReference type="InterPro" id="IPR036188">
    <property type="entry name" value="FAD/NAD-bd_sf"/>
</dbReference>
<dbReference type="InterPro" id="IPR049312">
    <property type="entry name" value="GIDA_C_N"/>
</dbReference>
<dbReference type="InterPro" id="IPR004416">
    <property type="entry name" value="MnmG"/>
</dbReference>
<dbReference type="InterPro" id="IPR002218">
    <property type="entry name" value="MnmG-rel"/>
</dbReference>
<dbReference type="InterPro" id="IPR020595">
    <property type="entry name" value="MnmG-rel_CS"/>
</dbReference>
<dbReference type="InterPro" id="IPR026904">
    <property type="entry name" value="MnmG_C"/>
</dbReference>
<dbReference type="InterPro" id="IPR047001">
    <property type="entry name" value="MnmG_C_subdom"/>
</dbReference>
<dbReference type="InterPro" id="IPR044920">
    <property type="entry name" value="MnmG_C_subdom_sf"/>
</dbReference>
<dbReference type="InterPro" id="IPR040131">
    <property type="entry name" value="MnmG_N"/>
</dbReference>
<dbReference type="NCBIfam" id="TIGR00136">
    <property type="entry name" value="mnmG_gidA"/>
    <property type="match status" value="1"/>
</dbReference>
<dbReference type="PANTHER" id="PTHR11806">
    <property type="entry name" value="GLUCOSE INHIBITED DIVISION PROTEIN A"/>
    <property type="match status" value="1"/>
</dbReference>
<dbReference type="PANTHER" id="PTHR11806:SF0">
    <property type="entry name" value="PROTEIN MTO1 HOMOLOG, MITOCHONDRIAL"/>
    <property type="match status" value="1"/>
</dbReference>
<dbReference type="Pfam" id="PF01134">
    <property type="entry name" value="GIDA"/>
    <property type="match status" value="1"/>
</dbReference>
<dbReference type="Pfam" id="PF21680">
    <property type="entry name" value="GIDA_C_1st"/>
    <property type="match status" value="1"/>
</dbReference>
<dbReference type="Pfam" id="PF13932">
    <property type="entry name" value="SAM_GIDA_C"/>
    <property type="match status" value="1"/>
</dbReference>
<dbReference type="PRINTS" id="PR00368">
    <property type="entry name" value="FADPNR"/>
</dbReference>
<dbReference type="SMART" id="SM01228">
    <property type="entry name" value="GIDA_assoc_3"/>
    <property type="match status" value="1"/>
</dbReference>
<dbReference type="SUPFAM" id="SSF51905">
    <property type="entry name" value="FAD/NAD(P)-binding domain"/>
    <property type="match status" value="1"/>
</dbReference>
<dbReference type="PROSITE" id="PS01280">
    <property type="entry name" value="GIDA_1"/>
    <property type="match status" value="1"/>
</dbReference>
<dbReference type="PROSITE" id="PS01281">
    <property type="entry name" value="GIDA_2"/>
    <property type="match status" value="1"/>
</dbReference>
<keyword id="KW-0963">Cytoplasm</keyword>
<keyword id="KW-0274">FAD</keyword>
<keyword id="KW-0285">Flavoprotein</keyword>
<keyword id="KW-0520">NAD</keyword>
<keyword id="KW-1185">Reference proteome</keyword>
<keyword id="KW-0819">tRNA processing</keyword>
<feature type="chain" id="PRO_1000016617" description="tRNA uridine 5-carboxymethylaminomethyl modification enzyme MnmG">
    <location>
        <begin position="1"/>
        <end position="630"/>
    </location>
</feature>
<feature type="binding site" evidence="1">
    <location>
        <begin position="15"/>
        <end position="20"/>
    </location>
    <ligand>
        <name>FAD</name>
        <dbReference type="ChEBI" id="CHEBI:57692"/>
    </ligand>
</feature>
<feature type="binding site" evidence="1">
    <location>
        <begin position="276"/>
        <end position="290"/>
    </location>
    <ligand>
        <name>NAD(+)</name>
        <dbReference type="ChEBI" id="CHEBI:57540"/>
    </ligand>
</feature>
<proteinExistence type="inferred from homology"/>
<evidence type="ECO:0000255" key="1">
    <source>
        <dbReference type="HAMAP-Rule" id="MF_00129"/>
    </source>
</evidence>
<organism>
    <name type="scientific">Latilactobacillus sakei subsp. sakei (strain 23K)</name>
    <name type="common">Lactobacillus sakei subsp. sakei</name>
    <dbReference type="NCBI Taxonomy" id="314315"/>
    <lineage>
        <taxon>Bacteria</taxon>
        <taxon>Bacillati</taxon>
        <taxon>Bacillota</taxon>
        <taxon>Bacilli</taxon>
        <taxon>Lactobacillales</taxon>
        <taxon>Lactobacillaceae</taxon>
        <taxon>Latilactobacillus</taxon>
    </lineage>
</organism>
<gene>
    <name evidence="1" type="primary">mnmG</name>
    <name evidence="1" type="synonym">gidA</name>
    <name type="ordered locus">LCA_1879</name>
</gene>
<name>MNMG_LATSS</name>
<reference key="1">
    <citation type="journal article" date="2005" name="Nat. Biotechnol.">
        <title>The complete genome sequence of the meat-borne lactic acid bacterium Lactobacillus sakei 23K.</title>
        <authorList>
            <person name="Chaillou S."/>
            <person name="Champomier-Verges M.-C."/>
            <person name="Cornet M."/>
            <person name="Crutz-Le Coq A.-M."/>
            <person name="Dudez A.-M."/>
            <person name="Martin V."/>
            <person name="Beaufils S."/>
            <person name="Darbon-Rongere E."/>
            <person name="Bossy R."/>
            <person name="Loux V."/>
            <person name="Zagorec M."/>
        </authorList>
    </citation>
    <scope>NUCLEOTIDE SEQUENCE [LARGE SCALE GENOMIC DNA]</scope>
    <source>
        <strain>23K</strain>
    </source>
</reference>
<accession>Q38UF0</accession>
<sequence length="630" mass="69711">MREYDAAHYDVIVVGAGHAGSEAALAAARMGRETLLLTINLDMVAFMPCNPSLGGPAKGIVVREIDALGGQMGRNIDKTYIQMRMLNTGKGPAVRALRAQADKHAYHRTMKRTIETTEHLTLRQGIAESLIVEDGVCKGIVTNTGARYSADSVILTAGTASRGKIIIGELTYSSGPNNSIPSIKLSESLEDNGFVLTRFKTGTPPRVDGTTIDFSKTEEQPGDKEPNHFSFETPDSAYLKDQLSCWMTYTNDTTHQVIRDNLDRAPMFTGVIEGVGPRYCPSIEDKIVRFADKPRHQIFLEPEGRETEEYYVGDFSTSMPEEIQHKMIHSIEGLENAQMMRPGYAIEYDVVEPWQLKPTLETKVVENLYTAGQMNGTSGYEEAAGQGLMAGINAALKQTGRDPFILDRSEAYIGVLIDDLVTKGTKEPYRLLTSRAEYRLMLRHDNADLRLTEKGHELGLINDDRFDSYEVKKAAVEAELARLEKIRLKPTPEIQAFLAAKGEAPLKDGVLASDFLKRPEVKYADLIQFIPAVEGIDNRVVEQVEIQVKYAGYIDKEKAKIAKLKRMEAKKIPANIDYDAIEGLATEGRQKLQKIQPETLAQASRIGGVNPADIGILSVYIQQGKIAKVK</sequence>
<comment type="function">
    <text evidence="1">NAD-binding protein involved in the addition of a carboxymethylaminomethyl (cmnm) group at the wobble position (U34) of certain tRNAs, forming tRNA-cmnm(5)s(2)U34.</text>
</comment>
<comment type="cofactor">
    <cofactor evidence="1">
        <name>FAD</name>
        <dbReference type="ChEBI" id="CHEBI:57692"/>
    </cofactor>
</comment>
<comment type="subunit">
    <text evidence="1">Homodimer. Heterotetramer of two MnmE and two MnmG subunits.</text>
</comment>
<comment type="subcellular location">
    <subcellularLocation>
        <location evidence="1">Cytoplasm</location>
    </subcellularLocation>
</comment>
<comment type="similarity">
    <text evidence="1">Belongs to the MnmG family.</text>
</comment>
<protein>
    <recommendedName>
        <fullName evidence="1">tRNA uridine 5-carboxymethylaminomethyl modification enzyme MnmG</fullName>
    </recommendedName>
    <alternativeName>
        <fullName evidence="1">Glucose-inhibited division protein A</fullName>
    </alternativeName>
</protein>